<comment type="function">
    <text evidence="1">Catalyzes the addition of an amino acid to the nucleotide precursor UDP-N-acetylmuramoyl-L-alanyl-D-glutamate (UMAG) in the biosynthesis of bacterial cell-wall peptidoglycan.</text>
</comment>
<comment type="pathway">
    <text evidence="1">Cell wall biogenesis; peptidoglycan biosynthesis.</text>
</comment>
<comment type="subcellular location">
    <subcellularLocation>
        <location evidence="1">Cytoplasm</location>
    </subcellularLocation>
</comment>
<comment type="PTM">
    <text evidence="1">Carboxylation is probably crucial for Mg(2+) binding and, consequently, for the gamma-phosphate positioning of ATP.</text>
</comment>
<comment type="similarity">
    <text evidence="1">Belongs to the MurCDEF family. MurE subfamily.</text>
</comment>
<dbReference type="EC" id="6.3.2.-" evidence="1"/>
<dbReference type="EMBL" id="CP000033">
    <property type="protein sequence ID" value="AAV43620.1"/>
    <property type="molecule type" value="Genomic_DNA"/>
</dbReference>
<dbReference type="RefSeq" id="WP_011254584.1">
    <property type="nucleotide sequence ID" value="NC_006814.3"/>
</dbReference>
<dbReference type="RefSeq" id="YP_194651.1">
    <property type="nucleotide sequence ID" value="NC_006814.3"/>
</dbReference>
<dbReference type="SMR" id="Q5FI54"/>
<dbReference type="STRING" id="272621.LBA1818"/>
<dbReference type="DNASU" id="3251696"/>
<dbReference type="KEGG" id="lac:LBA1818"/>
<dbReference type="PATRIC" id="fig|272621.13.peg.1727"/>
<dbReference type="eggNOG" id="COG0769">
    <property type="taxonomic scope" value="Bacteria"/>
</dbReference>
<dbReference type="HOGENOM" id="CLU_022291_4_2_9"/>
<dbReference type="OrthoDB" id="9800958at2"/>
<dbReference type="BioCyc" id="LACI272621:G1G49-1775-MONOMER"/>
<dbReference type="UniPathway" id="UPA00219"/>
<dbReference type="Proteomes" id="UP000006381">
    <property type="component" value="Chromosome"/>
</dbReference>
<dbReference type="GO" id="GO:0005737">
    <property type="term" value="C:cytoplasm"/>
    <property type="evidence" value="ECO:0007669"/>
    <property type="project" value="UniProtKB-SubCell"/>
</dbReference>
<dbReference type="GO" id="GO:0016881">
    <property type="term" value="F:acid-amino acid ligase activity"/>
    <property type="evidence" value="ECO:0007669"/>
    <property type="project" value="UniProtKB-UniRule"/>
</dbReference>
<dbReference type="GO" id="GO:0005524">
    <property type="term" value="F:ATP binding"/>
    <property type="evidence" value="ECO:0007669"/>
    <property type="project" value="UniProtKB-UniRule"/>
</dbReference>
<dbReference type="GO" id="GO:0000287">
    <property type="term" value="F:magnesium ion binding"/>
    <property type="evidence" value="ECO:0007669"/>
    <property type="project" value="UniProtKB-UniRule"/>
</dbReference>
<dbReference type="GO" id="GO:0051301">
    <property type="term" value="P:cell division"/>
    <property type="evidence" value="ECO:0007669"/>
    <property type="project" value="UniProtKB-KW"/>
</dbReference>
<dbReference type="GO" id="GO:0071555">
    <property type="term" value="P:cell wall organization"/>
    <property type="evidence" value="ECO:0007669"/>
    <property type="project" value="UniProtKB-KW"/>
</dbReference>
<dbReference type="GO" id="GO:0009252">
    <property type="term" value="P:peptidoglycan biosynthetic process"/>
    <property type="evidence" value="ECO:0007669"/>
    <property type="project" value="UniProtKB-UniRule"/>
</dbReference>
<dbReference type="GO" id="GO:0008360">
    <property type="term" value="P:regulation of cell shape"/>
    <property type="evidence" value="ECO:0007669"/>
    <property type="project" value="UniProtKB-KW"/>
</dbReference>
<dbReference type="Gene3D" id="3.90.190.20">
    <property type="entry name" value="Mur ligase, C-terminal domain"/>
    <property type="match status" value="1"/>
</dbReference>
<dbReference type="Gene3D" id="3.40.1190.10">
    <property type="entry name" value="Mur-like, catalytic domain"/>
    <property type="match status" value="1"/>
</dbReference>
<dbReference type="Gene3D" id="3.40.1390.10">
    <property type="entry name" value="MurE/MurF, N-terminal domain"/>
    <property type="match status" value="1"/>
</dbReference>
<dbReference type="HAMAP" id="MF_00208">
    <property type="entry name" value="MurE"/>
    <property type="match status" value="1"/>
</dbReference>
<dbReference type="InterPro" id="IPR036565">
    <property type="entry name" value="Mur-like_cat_sf"/>
</dbReference>
<dbReference type="InterPro" id="IPR004101">
    <property type="entry name" value="Mur_ligase_C"/>
</dbReference>
<dbReference type="InterPro" id="IPR036615">
    <property type="entry name" value="Mur_ligase_C_dom_sf"/>
</dbReference>
<dbReference type="InterPro" id="IPR013221">
    <property type="entry name" value="Mur_ligase_cen"/>
</dbReference>
<dbReference type="InterPro" id="IPR035911">
    <property type="entry name" value="MurE/MurF_N"/>
</dbReference>
<dbReference type="InterPro" id="IPR005761">
    <property type="entry name" value="UDP-N-AcMur-Glu-dNH2Pim_ligase"/>
</dbReference>
<dbReference type="NCBIfam" id="TIGR01085">
    <property type="entry name" value="murE"/>
    <property type="match status" value="1"/>
</dbReference>
<dbReference type="NCBIfam" id="NF001127">
    <property type="entry name" value="PRK00139.2-1"/>
    <property type="match status" value="1"/>
</dbReference>
<dbReference type="NCBIfam" id="NF001130">
    <property type="entry name" value="PRK00139.2-4"/>
    <property type="match status" value="1"/>
</dbReference>
<dbReference type="PANTHER" id="PTHR23135">
    <property type="entry name" value="MUR LIGASE FAMILY MEMBER"/>
    <property type="match status" value="1"/>
</dbReference>
<dbReference type="PANTHER" id="PTHR23135:SF4">
    <property type="entry name" value="UDP-N-ACETYLMURAMOYL-L-ALANYL-D-GLUTAMATE--2,6-DIAMINOPIMELATE LIGASE MURE HOMOLOG, CHLOROPLASTIC"/>
    <property type="match status" value="1"/>
</dbReference>
<dbReference type="Pfam" id="PF02875">
    <property type="entry name" value="Mur_ligase_C"/>
    <property type="match status" value="1"/>
</dbReference>
<dbReference type="Pfam" id="PF08245">
    <property type="entry name" value="Mur_ligase_M"/>
    <property type="match status" value="1"/>
</dbReference>
<dbReference type="SUPFAM" id="SSF53623">
    <property type="entry name" value="MurD-like peptide ligases, catalytic domain"/>
    <property type="match status" value="1"/>
</dbReference>
<dbReference type="SUPFAM" id="SSF53244">
    <property type="entry name" value="MurD-like peptide ligases, peptide-binding domain"/>
    <property type="match status" value="1"/>
</dbReference>
<dbReference type="SUPFAM" id="SSF63418">
    <property type="entry name" value="MurE/MurF N-terminal domain"/>
    <property type="match status" value="1"/>
</dbReference>
<evidence type="ECO:0000255" key="1">
    <source>
        <dbReference type="HAMAP-Rule" id="MF_00208"/>
    </source>
</evidence>
<proteinExistence type="inferred from homology"/>
<sequence length="523" mass="57633">MSISLNTCILILKEHHLLKSSAVQDTVATKMDYVSYDSRDIQTNTLFFCKGAGFRPTYLSMAKSNGANCYVAEQPYPEGKGMHALIVRDVSKAMALLSAAFFRFPQDDLYVVAFTGTKGKTTSAYFLKGMLDQANGGRTALISSVNDVVGPKPEDSFKSSLTTPESLDLFRDMRTAVDNGMTHLVMEVSSQAYKKNRVFGLTYDLGFFLNISPDHIGPNEHPNFADYLHCKLQLMVNSRKCIINAETANFNEVYAAATTTTNPDSIYLFAREDFENPDLDVPIDFRFASQELDMKETRFKLFCATDKAKKLPINGDYTLKMLGDFNESNGTAAIIGAGLAGLNHDQCAKGIRNVTIPGRMQTERTKEHGMVVVDYAHNKASMMALMRFMQNEFNDPKIIVVVGAPGDKGVSRRPGFSESLSAYADKAFLTTDDPGFEDPKSIAEEIDAGIDHSKCDVTIELDRKKAIHDAIASAGPDDVVLICGKGADAFQKIRGVDTPYPSDIVVAQQVINELEGQDEHFRK</sequence>
<reference key="1">
    <citation type="journal article" date="2005" name="Proc. Natl. Acad. Sci. U.S.A.">
        <title>Complete genome sequence of the probiotic lactic acid bacterium Lactobacillus acidophilus NCFM.</title>
        <authorList>
            <person name="Altermann E."/>
            <person name="Russell W.M."/>
            <person name="Azcarate-Peril M.A."/>
            <person name="Barrangou R."/>
            <person name="Buck B.L."/>
            <person name="McAuliffe O."/>
            <person name="Souther N."/>
            <person name="Dobson A."/>
            <person name="Duong T."/>
            <person name="Callanan M."/>
            <person name="Lick S."/>
            <person name="Hamrick A."/>
            <person name="Cano R."/>
            <person name="Klaenhammer T.R."/>
        </authorList>
    </citation>
    <scope>NUCLEOTIDE SEQUENCE [LARGE SCALE GENOMIC DNA]</scope>
    <source>
        <strain>ATCC 700396 / NCK56 / N2 / NCFM</strain>
    </source>
</reference>
<gene>
    <name evidence="1" type="primary">murE</name>
    <name type="ordered locus">LBA1818</name>
</gene>
<organism>
    <name type="scientific">Lactobacillus acidophilus (strain ATCC 700396 / NCK56 / N2 / NCFM)</name>
    <dbReference type="NCBI Taxonomy" id="272621"/>
    <lineage>
        <taxon>Bacteria</taxon>
        <taxon>Bacillati</taxon>
        <taxon>Bacillota</taxon>
        <taxon>Bacilli</taxon>
        <taxon>Lactobacillales</taxon>
        <taxon>Lactobacillaceae</taxon>
        <taxon>Lactobacillus</taxon>
    </lineage>
</organism>
<keyword id="KW-0067">ATP-binding</keyword>
<keyword id="KW-0131">Cell cycle</keyword>
<keyword id="KW-0132">Cell division</keyword>
<keyword id="KW-0133">Cell shape</keyword>
<keyword id="KW-0961">Cell wall biogenesis/degradation</keyword>
<keyword id="KW-0963">Cytoplasm</keyword>
<keyword id="KW-0436">Ligase</keyword>
<keyword id="KW-0547">Nucleotide-binding</keyword>
<keyword id="KW-0573">Peptidoglycan synthesis</keyword>
<keyword id="KW-1185">Reference proteome</keyword>
<protein>
    <recommendedName>
        <fullName evidence="1">UDP-N-acetylmuramyl-tripeptide synthetase</fullName>
        <ecNumber evidence="1">6.3.2.-</ecNumber>
    </recommendedName>
    <alternativeName>
        <fullName evidence="1">UDP-MurNAc-tripeptide synthetase</fullName>
    </alternativeName>
</protein>
<accession>Q5FI54</accession>
<feature type="chain" id="PRO_1000012361" description="UDP-N-acetylmuramyl-tripeptide synthetase">
    <location>
        <begin position="1"/>
        <end position="523"/>
    </location>
</feature>
<feature type="binding site" evidence="1">
    <location>
        <position position="38"/>
    </location>
    <ligand>
        <name>UDP-N-acetyl-alpha-D-muramoyl-L-alanyl-D-glutamate</name>
        <dbReference type="ChEBI" id="CHEBI:83900"/>
    </ligand>
</feature>
<feature type="binding site" evidence="1">
    <location>
        <begin position="116"/>
        <end position="122"/>
    </location>
    <ligand>
        <name>ATP</name>
        <dbReference type="ChEBI" id="CHEBI:30616"/>
    </ligand>
</feature>
<feature type="binding site" evidence="1">
    <location>
        <begin position="162"/>
        <end position="163"/>
    </location>
    <ligand>
        <name>UDP-N-acetyl-alpha-D-muramoyl-L-alanyl-D-glutamate</name>
        <dbReference type="ChEBI" id="CHEBI:83900"/>
    </ligand>
</feature>
<feature type="binding site" evidence="1">
    <location>
        <position position="189"/>
    </location>
    <ligand>
        <name>UDP-N-acetyl-alpha-D-muramoyl-L-alanyl-D-glutamate</name>
        <dbReference type="ChEBI" id="CHEBI:83900"/>
    </ligand>
</feature>
<feature type="binding site" evidence="1">
    <location>
        <position position="197"/>
    </location>
    <ligand>
        <name>UDP-N-acetyl-alpha-D-muramoyl-L-alanyl-D-glutamate</name>
        <dbReference type="ChEBI" id="CHEBI:83900"/>
    </ligand>
</feature>
<feature type="modified residue" description="N6-carboxylysine" evidence="1">
    <location>
        <position position="231"/>
    </location>
</feature>
<name>MURE_LACAC</name>